<organism>
    <name type="scientific">Escherichia coli O17:K52:H18 (strain UMN026 / ExPEC)</name>
    <dbReference type="NCBI Taxonomy" id="585056"/>
    <lineage>
        <taxon>Bacteria</taxon>
        <taxon>Pseudomonadati</taxon>
        <taxon>Pseudomonadota</taxon>
        <taxon>Gammaproteobacteria</taxon>
        <taxon>Enterobacterales</taxon>
        <taxon>Enterobacteriaceae</taxon>
        <taxon>Escherichia</taxon>
    </lineage>
</organism>
<dbReference type="EC" id="3.5.1.105" evidence="1"/>
<dbReference type="EMBL" id="CU928163">
    <property type="protein sequence ID" value="CAR13218.1"/>
    <property type="molecule type" value="Genomic_DNA"/>
</dbReference>
<dbReference type="RefSeq" id="WP_000440439.1">
    <property type="nucleotide sequence ID" value="NC_011751.1"/>
</dbReference>
<dbReference type="RefSeq" id="YP_002412750.1">
    <property type="nucleotide sequence ID" value="NC_011751.1"/>
</dbReference>
<dbReference type="SMR" id="B7N569"/>
<dbReference type="STRING" id="585056.ECUMN_2022"/>
<dbReference type="KEGG" id="eum:ECUMN_2022"/>
<dbReference type="PATRIC" id="fig|585056.7.peg.2208"/>
<dbReference type="HOGENOM" id="CLU_064244_4_1_6"/>
<dbReference type="UniPathway" id="UPA00349"/>
<dbReference type="Proteomes" id="UP000007097">
    <property type="component" value="Chromosome"/>
</dbReference>
<dbReference type="GO" id="GO:0005737">
    <property type="term" value="C:cytoplasm"/>
    <property type="evidence" value="ECO:0007669"/>
    <property type="project" value="UniProtKB-SubCell"/>
</dbReference>
<dbReference type="GO" id="GO:0036311">
    <property type="term" value="F:chitin disaccharide deacetylase activity"/>
    <property type="evidence" value="ECO:0007669"/>
    <property type="project" value="UniProtKB-UniRule"/>
</dbReference>
<dbReference type="GO" id="GO:0019213">
    <property type="term" value="F:deacetylase activity"/>
    <property type="evidence" value="ECO:0007669"/>
    <property type="project" value="TreeGrafter"/>
</dbReference>
<dbReference type="GO" id="GO:0046872">
    <property type="term" value="F:metal ion binding"/>
    <property type="evidence" value="ECO:0007669"/>
    <property type="project" value="UniProtKB-KW"/>
</dbReference>
<dbReference type="GO" id="GO:0006032">
    <property type="term" value="P:chitin catabolic process"/>
    <property type="evidence" value="ECO:0007669"/>
    <property type="project" value="UniProtKB-UniPathway"/>
</dbReference>
<dbReference type="GO" id="GO:0052777">
    <property type="term" value="P:diacetylchitobiose catabolic process"/>
    <property type="evidence" value="ECO:0007669"/>
    <property type="project" value="UniProtKB-UniRule"/>
</dbReference>
<dbReference type="GO" id="GO:0000272">
    <property type="term" value="P:polysaccharide catabolic process"/>
    <property type="evidence" value="ECO:0007669"/>
    <property type="project" value="UniProtKB-UniRule"/>
</dbReference>
<dbReference type="CDD" id="cd10803">
    <property type="entry name" value="YdjC_EF3048_like"/>
    <property type="match status" value="1"/>
</dbReference>
<dbReference type="FunFam" id="3.20.20.370:FF:000001">
    <property type="entry name" value="Chitooligosaccharide deacetylase"/>
    <property type="match status" value="1"/>
</dbReference>
<dbReference type="Gene3D" id="3.20.20.370">
    <property type="entry name" value="Glycoside hydrolase/deacetylase"/>
    <property type="match status" value="1"/>
</dbReference>
<dbReference type="HAMAP" id="MF_01246">
    <property type="entry name" value="COD"/>
    <property type="match status" value="1"/>
</dbReference>
<dbReference type="InterPro" id="IPR022948">
    <property type="entry name" value="COD_ChbG_bac"/>
</dbReference>
<dbReference type="InterPro" id="IPR011330">
    <property type="entry name" value="Glyco_hydro/deAcase_b/a-brl"/>
</dbReference>
<dbReference type="InterPro" id="IPR006879">
    <property type="entry name" value="YdjC-like"/>
</dbReference>
<dbReference type="NCBIfam" id="NF002559">
    <property type="entry name" value="PRK02134.1"/>
    <property type="match status" value="1"/>
</dbReference>
<dbReference type="PANTHER" id="PTHR31609:SF1">
    <property type="entry name" value="CARBOHYDRATE DEACETYLASE"/>
    <property type="match status" value="1"/>
</dbReference>
<dbReference type="PANTHER" id="PTHR31609">
    <property type="entry name" value="YDJC DEACETYLASE FAMILY MEMBER"/>
    <property type="match status" value="1"/>
</dbReference>
<dbReference type="Pfam" id="PF04794">
    <property type="entry name" value="YdjC"/>
    <property type="match status" value="1"/>
</dbReference>
<dbReference type="SUPFAM" id="SSF88713">
    <property type="entry name" value="Glycoside hydrolase/deacetylase"/>
    <property type="match status" value="1"/>
</dbReference>
<accession>B7N569</accession>
<feature type="chain" id="PRO_1000139824" description="Chitooligosaccharide deacetylase">
    <location>
        <begin position="1"/>
        <end position="249"/>
    </location>
</feature>
<feature type="binding site" evidence="1">
    <location>
        <position position="61"/>
    </location>
    <ligand>
        <name>Mg(2+)</name>
        <dbReference type="ChEBI" id="CHEBI:18420"/>
    </ligand>
</feature>
<feature type="binding site" evidence="1">
    <location>
        <position position="125"/>
    </location>
    <ligand>
        <name>Mg(2+)</name>
        <dbReference type="ChEBI" id="CHEBI:18420"/>
    </ligand>
</feature>
<keyword id="KW-0119">Carbohydrate metabolism</keyword>
<keyword id="KW-0146">Chitin degradation</keyword>
<keyword id="KW-0963">Cytoplasm</keyword>
<keyword id="KW-0378">Hydrolase</keyword>
<keyword id="KW-0460">Magnesium</keyword>
<keyword id="KW-0479">Metal-binding</keyword>
<keyword id="KW-0624">Polysaccharide degradation</keyword>
<gene>
    <name evidence="1" type="primary">chbG</name>
    <name type="ordered locus">ECUMN_2022</name>
</gene>
<proteinExistence type="inferred from homology"/>
<protein>
    <recommendedName>
        <fullName evidence="1">Chitooligosaccharide deacetylase</fullName>
        <shortName evidence="1">COD</shortName>
        <ecNumber evidence="1">3.5.1.105</ecNumber>
    </recommendedName>
    <alternativeName>
        <fullName evidence="1">Chitin disaccharide deacetylase</fullName>
    </alternativeName>
    <alternativeName>
        <fullName evidence="1">Chitobiose deacetylase</fullName>
    </alternativeName>
    <alternativeName>
        <fullName evidence="1">Chitobiose-6P deacetylase</fullName>
    </alternativeName>
    <alternativeName>
        <fullName evidence="1">Chitotriose deacetylase</fullName>
    </alternativeName>
    <alternativeName>
        <fullName evidence="1">Chitotriose-6P deacetylase</fullName>
    </alternativeName>
</protein>
<sequence>MERLLIVNADDFGLSKGQNYGIIEACRNGIVTSTTALVNGQAIDHAVQLSRDEPSLAIGMHFVLTMGKPLTAMPGLTRDGVLGKWIWQLAEEDALPLEEITQELASQYLRFIELFGRKPTHLDSHHHVHMFPQIFPIVARFAAEEGIALRADRQMVFDLPVNLRTTQGFSSAFYGEEISESLFLQVLDDSSHRGERSLEVMCHPAFIDNTIRQSAYCLPRLTELDVLTSASLKYAIAERGYRLGSYLDV</sequence>
<name>CHBG_ECOLU</name>
<evidence type="ECO:0000255" key="1">
    <source>
        <dbReference type="HAMAP-Rule" id="MF_01246"/>
    </source>
</evidence>
<comment type="function">
    <text evidence="1">Involved in the degradation of chitin. ChbG is essential for growth on the acetylated chitooligosaccharides chitobiose and chitotriose but is dispensable for growth on cellobiose and chitosan dimer, the deacetylated form of chitobiose. Deacetylation of chitobiose-6-P and chitotriose-6-P is necessary for both the activation of the chb promoter by the regulatory protein ChbR and the hydrolysis of phosphorylated beta-glucosides by the phospho-beta-glucosidase ChbF. Catalyzes the removal of only one acetyl group from chitobiose-6-P to yield monoacetylchitobiose-6-P, the inducer of ChbR and the substrate of ChbF.</text>
</comment>
<comment type="catalytic activity">
    <reaction evidence="1">
        <text>N,N'-diacetylchitobiose + H2O = N-acetyl-beta-D-glucosaminyl-(1-&gt;4)-D-glucosamine + acetate</text>
        <dbReference type="Rhea" id="RHEA:27469"/>
        <dbReference type="ChEBI" id="CHEBI:15377"/>
        <dbReference type="ChEBI" id="CHEBI:28681"/>
        <dbReference type="ChEBI" id="CHEBI:30089"/>
        <dbReference type="ChEBI" id="CHEBI:59910"/>
        <dbReference type="EC" id="3.5.1.105"/>
    </reaction>
</comment>
<comment type="catalytic activity">
    <reaction evidence="1">
        <text>diacetylchitobiose-6'-phosphate + H2O = N'-monoacetylchitobiose-6'-phosphate + acetate</text>
        <dbReference type="Rhea" id="RHEA:35083"/>
        <dbReference type="ChEBI" id="CHEBI:15377"/>
        <dbReference type="ChEBI" id="CHEBI:30089"/>
        <dbReference type="ChEBI" id="CHEBI:64883"/>
        <dbReference type="ChEBI" id="CHEBI:71315"/>
    </reaction>
</comment>
<comment type="cofactor">
    <cofactor evidence="1">
        <name>Mg(2+)</name>
        <dbReference type="ChEBI" id="CHEBI:18420"/>
    </cofactor>
</comment>
<comment type="pathway">
    <text evidence="1">Glycan degradation; chitin degradation.</text>
</comment>
<comment type="subunit">
    <text evidence="1">Homodimer.</text>
</comment>
<comment type="subcellular location">
    <subcellularLocation>
        <location evidence="1">Cytoplasm</location>
    </subcellularLocation>
</comment>
<comment type="similarity">
    <text evidence="1">Belongs to the YdjC deacetylase family. ChbG subfamily.</text>
</comment>
<reference key="1">
    <citation type="journal article" date="2009" name="PLoS Genet.">
        <title>Organised genome dynamics in the Escherichia coli species results in highly diverse adaptive paths.</title>
        <authorList>
            <person name="Touchon M."/>
            <person name="Hoede C."/>
            <person name="Tenaillon O."/>
            <person name="Barbe V."/>
            <person name="Baeriswyl S."/>
            <person name="Bidet P."/>
            <person name="Bingen E."/>
            <person name="Bonacorsi S."/>
            <person name="Bouchier C."/>
            <person name="Bouvet O."/>
            <person name="Calteau A."/>
            <person name="Chiapello H."/>
            <person name="Clermont O."/>
            <person name="Cruveiller S."/>
            <person name="Danchin A."/>
            <person name="Diard M."/>
            <person name="Dossat C."/>
            <person name="Karoui M.E."/>
            <person name="Frapy E."/>
            <person name="Garry L."/>
            <person name="Ghigo J.M."/>
            <person name="Gilles A.M."/>
            <person name="Johnson J."/>
            <person name="Le Bouguenec C."/>
            <person name="Lescat M."/>
            <person name="Mangenot S."/>
            <person name="Martinez-Jehanne V."/>
            <person name="Matic I."/>
            <person name="Nassif X."/>
            <person name="Oztas S."/>
            <person name="Petit M.A."/>
            <person name="Pichon C."/>
            <person name="Rouy Z."/>
            <person name="Ruf C.S."/>
            <person name="Schneider D."/>
            <person name="Tourret J."/>
            <person name="Vacherie B."/>
            <person name="Vallenet D."/>
            <person name="Medigue C."/>
            <person name="Rocha E.P.C."/>
            <person name="Denamur E."/>
        </authorList>
    </citation>
    <scope>NUCLEOTIDE SEQUENCE [LARGE SCALE GENOMIC DNA]</scope>
    <source>
        <strain>UMN026 / ExPEC</strain>
    </source>
</reference>